<keyword id="KW-0687">Ribonucleoprotein</keyword>
<keyword id="KW-0689">Ribosomal protein</keyword>
<comment type="similarity">
    <text evidence="1">Belongs to the bacterial ribosomal protein bL28 family.</text>
</comment>
<proteinExistence type="inferred from homology"/>
<organism>
    <name type="scientific">Neisseria meningitidis serogroup C / serotype 2a (strain ATCC 700532 / DSM 15464 / FAM18)</name>
    <dbReference type="NCBI Taxonomy" id="272831"/>
    <lineage>
        <taxon>Bacteria</taxon>
        <taxon>Pseudomonadati</taxon>
        <taxon>Pseudomonadota</taxon>
        <taxon>Betaproteobacteria</taxon>
        <taxon>Neisseriales</taxon>
        <taxon>Neisseriaceae</taxon>
        <taxon>Neisseria</taxon>
    </lineage>
</organism>
<name>RL28_NEIMF</name>
<sequence length="77" mass="8818">MARVCKVTGKRPMSGNNVSHANNKTKRRFLPNLQSRRFWVESENRWVRLRVSNAALRTIDKVGIDVVLADLRARGEA</sequence>
<gene>
    <name evidence="1" type="primary">rpmB</name>
    <name type="ordered locus">NMC1851</name>
</gene>
<accession>A1KVW2</accession>
<dbReference type="EMBL" id="AM421808">
    <property type="protein sequence ID" value="CAM11017.1"/>
    <property type="molecule type" value="Genomic_DNA"/>
</dbReference>
<dbReference type="RefSeq" id="WP_002216391.1">
    <property type="nucleotide sequence ID" value="NC_008767.1"/>
</dbReference>
<dbReference type="SMR" id="A1KVW2"/>
<dbReference type="GeneID" id="93387412"/>
<dbReference type="KEGG" id="nmc:NMC1851"/>
<dbReference type="HOGENOM" id="CLU_064548_3_1_4"/>
<dbReference type="Proteomes" id="UP000002286">
    <property type="component" value="Chromosome"/>
</dbReference>
<dbReference type="GO" id="GO:0022625">
    <property type="term" value="C:cytosolic large ribosomal subunit"/>
    <property type="evidence" value="ECO:0007669"/>
    <property type="project" value="TreeGrafter"/>
</dbReference>
<dbReference type="GO" id="GO:0003735">
    <property type="term" value="F:structural constituent of ribosome"/>
    <property type="evidence" value="ECO:0007669"/>
    <property type="project" value="InterPro"/>
</dbReference>
<dbReference type="GO" id="GO:0006412">
    <property type="term" value="P:translation"/>
    <property type="evidence" value="ECO:0007669"/>
    <property type="project" value="UniProtKB-UniRule"/>
</dbReference>
<dbReference type="FunFam" id="2.30.170.40:FF:000001">
    <property type="entry name" value="50S ribosomal protein L28"/>
    <property type="match status" value="1"/>
</dbReference>
<dbReference type="Gene3D" id="2.30.170.40">
    <property type="entry name" value="Ribosomal protein L28/L24"/>
    <property type="match status" value="1"/>
</dbReference>
<dbReference type="HAMAP" id="MF_00373">
    <property type="entry name" value="Ribosomal_bL28"/>
    <property type="match status" value="1"/>
</dbReference>
<dbReference type="InterPro" id="IPR026569">
    <property type="entry name" value="Ribosomal_bL28"/>
</dbReference>
<dbReference type="InterPro" id="IPR034704">
    <property type="entry name" value="Ribosomal_bL28/bL31-like_sf"/>
</dbReference>
<dbReference type="InterPro" id="IPR001383">
    <property type="entry name" value="Ribosomal_bL28_bact-type"/>
</dbReference>
<dbReference type="InterPro" id="IPR037147">
    <property type="entry name" value="Ribosomal_bL28_sf"/>
</dbReference>
<dbReference type="NCBIfam" id="TIGR00009">
    <property type="entry name" value="L28"/>
    <property type="match status" value="1"/>
</dbReference>
<dbReference type="PANTHER" id="PTHR13528">
    <property type="entry name" value="39S RIBOSOMAL PROTEIN L28, MITOCHONDRIAL"/>
    <property type="match status" value="1"/>
</dbReference>
<dbReference type="PANTHER" id="PTHR13528:SF2">
    <property type="entry name" value="LARGE RIBOSOMAL SUBUNIT PROTEIN BL28M"/>
    <property type="match status" value="1"/>
</dbReference>
<dbReference type="Pfam" id="PF00830">
    <property type="entry name" value="Ribosomal_L28"/>
    <property type="match status" value="1"/>
</dbReference>
<dbReference type="SUPFAM" id="SSF143800">
    <property type="entry name" value="L28p-like"/>
    <property type="match status" value="1"/>
</dbReference>
<evidence type="ECO:0000255" key="1">
    <source>
        <dbReference type="HAMAP-Rule" id="MF_00373"/>
    </source>
</evidence>
<evidence type="ECO:0000256" key="2">
    <source>
        <dbReference type="SAM" id="MobiDB-lite"/>
    </source>
</evidence>
<evidence type="ECO:0000305" key="3"/>
<reference key="1">
    <citation type="journal article" date="2007" name="PLoS Genet.">
        <title>Meningococcal genetic variation mechanisms viewed through comparative analysis of serogroup C strain FAM18.</title>
        <authorList>
            <person name="Bentley S.D."/>
            <person name="Vernikos G.S."/>
            <person name="Snyder L.A.S."/>
            <person name="Churcher C."/>
            <person name="Arrowsmith C."/>
            <person name="Chillingworth T."/>
            <person name="Cronin A."/>
            <person name="Davis P.H."/>
            <person name="Holroyd N.E."/>
            <person name="Jagels K."/>
            <person name="Maddison M."/>
            <person name="Moule S."/>
            <person name="Rabbinowitsch E."/>
            <person name="Sharp S."/>
            <person name="Unwin L."/>
            <person name="Whitehead S."/>
            <person name="Quail M.A."/>
            <person name="Achtman M."/>
            <person name="Barrell B.G."/>
            <person name="Saunders N.J."/>
            <person name="Parkhill J."/>
        </authorList>
    </citation>
    <scope>NUCLEOTIDE SEQUENCE [LARGE SCALE GENOMIC DNA]</scope>
    <source>
        <strain>ATCC 700532 / DSM 15464 / FAM18</strain>
    </source>
</reference>
<protein>
    <recommendedName>
        <fullName evidence="1">Large ribosomal subunit protein bL28</fullName>
    </recommendedName>
    <alternativeName>
        <fullName evidence="3">50S ribosomal protein L28</fullName>
    </alternativeName>
</protein>
<feature type="chain" id="PRO_1000007282" description="Large ribosomal subunit protein bL28">
    <location>
        <begin position="1"/>
        <end position="77"/>
    </location>
</feature>
<feature type="region of interest" description="Disordered" evidence="2">
    <location>
        <begin position="1"/>
        <end position="26"/>
    </location>
</feature>